<name>SDHF3_HUMAN</name>
<dbReference type="EMBL" id="AF201933">
    <property type="protein sequence ID" value="AAF86869.1"/>
    <property type="molecule type" value="mRNA"/>
</dbReference>
<dbReference type="EMBL" id="AC073421">
    <property type="status" value="NOT_ANNOTATED_CDS"/>
    <property type="molecule type" value="Genomic_DNA"/>
</dbReference>
<dbReference type="EMBL" id="AC073900">
    <property type="protein sequence ID" value="AAS07570.1"/>
    <property type="molecule type" value="Genomic_DNA"/>
</dbReference>
<dbReference type="EMBL" id="CH236949">
    <property type="protein sequence ID" value="EAL24120.1"/>
    <property type="molecule type" value="Genomic_DNA"/>
</dbReference>
<dbReference type="EMBL" id="CH471091">
    <property type="protein sequence ID" value="EAW76740.1"/>
    <property type="molecule type" value="Genomic_DNA"/>
</dbReference>
<dbReference type="EMBL" id="BC020621">
    <property type="protein sequence ID" value="AAH20621.1"/>
    <property type="molecule type" value="mRNA"/>
</dbReference>
<dbReference type="EMBL" id="BC022858">
    <property type="protein sequence ID" value="AAH22858.1"/>
    <property type="molecule type" value="mRNA"/>
</dbReference>
<dbReference type="CCDS" id="CCDS5648.1"/>
<dbReference type="RefSeq" id="NP_064571.1">
    <property type="nucleotide sequence ID" value="NM_020186.3"/>
</dbReference>
<dbReference type="BioGRID" id="121316">
    <property type="interactions" value="80"/>
</dbReference>
<dbReference type="FunCoup" id="Q9NRP4">
    <property type="interactions" value="620"/>
</dbReference>
<dbReference type="IntAct" id="Q9NRP4">
    <property type="interactions" value="17"/>
</dbReference>
<dbReference type="STRING" id="9606.ENSP00000414066"/>
<dbReference type="iPTMnet" id="Q9NRP4"/>
<dbReference type="PhosphoSitePlus" id="Q9NRP4"/>
<dbReference type="BioMuta" id="SDHAF3"/>
<dbReference type="DMDM" id="74734325"/>
<dbReference type="jPOST" id="Q9NRP4"/>
<dbReference type="MassIVE" id="Q9NRP4"/>
<dbReference type="PaxDb" id="9606-ENSP00000414066"/>
<dbReference type="PeptideAtlas" id="Q9NRP4"/>
<dbReference type="ProteomicsDB" id="82400"/>
<dbReference type="Pumba" id="Q9NRP4"/>
<dbReference type="Antibodypedia" id="55557">
    <property type="antibodies" value="68 antibodies from 14 providers"/>
</dbReference>
<dbReference type="DNASU" id="57001"/>
<dbReference type="Ensembl" id="ENST00000432641.3">
    <property type="protein sequence ID" value="ENSP00000414066.2"/>
    <property type="gene ID" value="ENSG00000196636.8"/>
</dbReference>
<dbReference type="GeneID" id="57001"/>
<dbReference type="KEGG" id="hsa:57001"/>
<dbReference type="MANE-Select" id="ENST00000432641.3">
    <property type="protein sequence ID" value="ENSP00000414066.2"/>
    <property type="RefSeq nucleotide sequence ID" value="NM_020186.3"/>
    <property type="RefSeq protein sequence ID" value="NP_064571.1"/>
</dbReference>
<dbReference type="UCSC" id="uc003uoo.5">
    <property type="organism name" value="human"/>
</dbReference>
<dbReference type="AGR" id="HGNC:21752"/>
<dbReference type="CTD" id="57001"/>
<dbReference type="DisGeNET" id="57001"/>
<dbReference type="GeneCards" id="SDHAF3"/>
<dbReference type="HGNC" id="HGNC:21752">
    <property type="gene designation" value="SDHAF3"/>
</dbReference>
<dbReference type="HPA" id="ENSG00000196636">
    <property type="expression patterns" value="Low tissue specificity"/>
</dbReference>
<dbReference type="MalaCards" id="SDHAF3"/>
<dbReference type="MIM" id="615773">
    <property type="type" value="gene"/>
</dbReference>
<dbReference type="neXtProt" id="NX_Q9NRP4"/>
<dbReference type="OpenTargets" id="ENSG00000196636"/>
<dbReference type="PharmGKB" id="PA134976380"/>
<dbReference type="VEuPathDB" id="HostDB:ENSG00000196636"/>
<dbReference type="eggNOG" id="KOG4100">
    <property type="taxonomic scope" value="Eukaryota"/>
</dbReference>
<dbReference type="GeneTree" id="ENSGT00390000010029"/>
<dbReference type="HOGENOM" id="CLU_102310_2_1_1"/>
<dbReference type="InParanoid" id="Q9NRP4"/>
<dbReference type="OMA" id="WQQTNEN"/>
<dbReference type="OrthoDB" id="278329at2759"/>
<dbReference type="PAN-GO" id="Q9NRP4">
    <property type="GO annotations" value="3 GO annotations based on evolutionary models"/>
</dbReference>
<dbReference type="PhylomeDB" id="Q9NRP4"/>
<dbReference type="TreeFam" id="TF105635"/>
<dbReference type="PathwayCommons" id="Q9NRP4"/>
<dbReference type="Reactome" id="R-HSA-9854311">
    <property type="pathway name" value="Maturation of TCA enzymes and regulation of TCA cycle"/>
</dbReference>
<dbReference type="SignaLink" id="Q9NRP4"/>
<dbReference type="BioGRID-ORCS" id="57001">
    <property type="hits" value="16 hits in 1151 CRISPR screens"/>
</dbReference>
<dbReference type="GenomeRNAi" id="57001"/>
<dbReference type="Pharos" id="Q9NRP4">
    <property type="development level" value="Tbio"/>
</dbReference>
<dbReference type="PRO" id="PR:Q9NRP4"/>
<dbReference type="Proteomes" id="UP000005640">
    <property type="component" value="Chromosome 7"/>
</dbReference>
<dbReference type="RNAct" id="Q9NRP4">
    <property type="molecule type" value="protein"/>
</dbReference>
<dbReference type="Bgee" id="ENSG00000196636">
    <property type="expression patterns" value="Expressed in primordial germ cell in gonad and 166 other cell types or tissues"/>
</dbReference>
<dbReference type="ExpressionAtlas" id="Q9NRP4">
    <property type="expression patterns" value="baseline and differential"/>
</dbReference>
<dbReference type="GO" id="GO:0005758">
    <property type="term" value="C:mitochondrial intermembrane space"/>
    <property type="evidence" value="ECO:0000250"/>
    <property type="project" value="HGNC-UCL"/>
</dbReference>
<dbReference type="GO" id="GO:0005759">
    <property type="term" value="C:mitochondrial matrix"/>
    <property type="evidence" value="ECO:0000304"/>
    <property type="project" value="Reactome"/>
</dbReference>
<dbReference type="GO" id="GO:0005739">
    <property type="term" value="C:mitochondrion"/>
    <property type="evidence" value="ECO:0006056"/>
    <property type="project" value="FlyBase"/>
</dbReference>
<dbReference type="GO" id="GO:0034553">
    <property type="term" value="P:mitochondrial respiratory chain complex II assembly"/>
    <property type="evidence" value="ECO:0000318"/>
    <property type="project" value="GO_Central"/>
</dbReference>
<dbReference type="GO" id="GO:0006111">
    <property type="term" value="P:regulation of gluconeogenesis"/>
    <property type="evidence" value="ECO:0000250"/>
    <property type="project" value="UniProtKB"/>
</dbReference>
<dbReference type="GO" id="GO:0006105">
    <property type="term" value="P:succinate metabolic process"/>
    <property type="evidence" value="ECO:0000318"/>
    <property type="project" value="GO_Central"/>
</dbReference>
<dbReference type="CDD" id="cd20270">
    <property type="entry name" value="Complex1_LYR_SDHAF3_LYRM10"/>
    <property type="match status" value="1"/>
</dbReference>
<dbReference type="InterPro" id="IPR008381">
    <property type="entry name" value="SDHAF3/Sdh7"/>
</dbReference>
<dbReference type="PANTHER" id="PTHR13137">
    <property type="entry name" value="DC11 ACN9 HOMOLOG"/>
    <property type="match status" value="1"/>
</dbReference>
<dbReference type="PANTHER" id="PTHR13137:SF6">
    <property type="entry name" value="SUCCINATE DEHYDROGENASE ASSEMBLY FACTOR 3, MITOCHONDRIAL"/>
    <property type="match status" value="1"/>
</dbReference>
<dbReference type="Pfam" id="PF13233">
    <property type="entry name" value="Complex1_LYR_2"/>
    <property type="match status" value="1"/>
</dbReference>
<accession>Q9NRP4</accession>
<accession>A4D1J3</accession>
<accession>Q75MD6</accession>
<proteinExistence type="evidence at protein level"/>
<gene>
    <name evidence="5" type="primary">SDHAF3</name>
    <name evidence="5" type="synonym">ACN9</name>
    <name type="ORF">DC11</name>
</gene>
<protein>
    <recommendedName>
        <fullName evidence="1 5">Succinate dehydrogenase assembly factor 3, mitochondrial</fullName>
        <shortName evidence="1">SDH assembly factor 3</shortName>
        <shortName evidence="1">SDHAF3</shortName>
    </recommendedName>
</protein>
<organism>
    <name type="scientific">Homo sapiens</name>
    <name type="common">Human</name>
    <dbReference type="NCBI Taxonomy" id="9606"/>
    <lineage>
        <taxon>Eukaryota</taxon>
        <taxon>Metazoa</taxon>
        <taxon>Chordata</taxon>
        <taxon>Craniata</taxon>
        <taxon>Vertebrata</taxon>
        <taxon>Euteleostomi</taxon>
        <taxon>Mammalia</taxon>
        <taxon>Eutheria</taxon>
        <taxon>Euarchontoglires</taxon>
        <taxon>Primates</taxon>
        <taxon>Haplorrhini</taxon>
        <taxon>Catarrhini</taxon>
        <taxon>Hominidae</taxon>
        <taxon>Homo</taxon>
    </lineage>
</organism>
<evidence type="ECO:0000250" key="1">
    <source>
        <dbReference type="UniProtKB" id="Q04401"/>
    </source>
</evidence>
<evidence type="ECO:0000250" key="2">
    <source>
        <dbReference type="UniProtKB" id="Q8SZ16"/>
    </source>
</evidence>
<evidence type="ECO:0000255" key="3"/>
<evidence type="ECO:0000305" key="4"/>
<evidence type="ECO:0000312" key="5">
    <source>
        <dbReference type="HGNC" id="HGNC:21752"/>
    </source>
</evidence>
<feature type="transit peptide" description="Mitochondrion" evidence="3">
    <location>
        <begin position="1"/>
        <end position="30"/>
    </location>
</feature>
<feature type="chain" id="PRO_0000042653" description="Succinate dehydrogenase assembly factor 3, mitochondrial">
    <location>
        <begin position="31"/>
        <end position="125"/>
    </location>
</feature>
<reference key="1">
    <citation type="submission" date="1999-11" db="EMBL/GenBank/DDBJ databases">
        <title>Novel genes expressed in human dendritic cell.</title>
        <authorList>
            <person name="Gu J."/>
            <person name="Huang Q."/>
            <person name="Shi J."/>
            <person name="Xu S."/>
            <person name="Han Z."/>
            <person name="Fu G."/>
            <person name="Chen Z."/>
        </authorList>
    </citation>
    <scope>NUCLEOTIDE SEQUENCE [LARGE SCALE MRNA]</scope>
    <source>
        <tissue>Dendritic cell</tissue>
    </source>
</reference>
<reference key="2">
    <citation type="journal article" date="2003" name="Science">
        <title>Human chromosome 7: DNA sequence and biology.</title>
        <authorList>
            <person name="Scherer S.W."/>
            <person name="Cheung J."/>
            <person name="MacDonald J.R."/>
            <person name="Osborne L.R."/>
            <person name="Nakabayashi K."/>
            <person name="Herbrick J.-A."/>
            <person name="Carson A.R."/>
            <person name="Parker-Katiraee L."/>
            <person name="Skaug J."/>
            <person name="Khaja R."/>
            <person name="Zhang J."/>
            <person name="Hudek A.K."/>
            <person name="Li M."/>
            <person name="Haddad M."/>
            <person name="Duggan G.E."/>
            <person name="Fernandez B.A."/>
            <person name="Kanematsu E."/>
            <person name="Gentles S."/>
            <person name="Christopoulos C.C."/>
            <person name="Choufani S."/>
            <person name="Kwasnicka D."/>
            <person name="Zheng X.H."/>
            <person name="Lai Z."/>
            <person name="Nusskern D.R."/>
            <person name="Zhang Q."/>
            <person name="Gu Z."/>
            <person name="Lu F."/>
            <person name="Zeesman S."/>
            <person name="Nowaczyk M.J."/>
            <person name="Teshima I."/>
            <person name="Chitayat D."/>
            <person name="Shuman C."/>
            <person name="Weksberg R."/>
            <person name="Zackai E.H."/>
            <person name="Grebe T.A."/>
            <person name="Cox S.R."/>
            <person name="Kirkpatrick S.J."/>
            <person name="Rahman N."/>
            <person name="Friedman J.M."/>
            <person name="Heng H.H.Q."/>
            <person name="Pelicci P.G."/>
            <person name="Lo-Coco F."/>
            <person name="Belloni E."/>
            <person name="Shaffer L.G."/>
            <person name="Pober B."/>
            <person name="Morton C.C."/>
            <person name="Gusella J.F."/>
            <person name="Bruns G.A.P."/>
            <person name="Korf B.R."/>
            <person name="Quade B.J."/>
            <person name="Ligon A.H."/>
            <person name="Ferguson H."/>
            <person name="Higgins A.W."/>
            <person name="Leach N.T."/>
            <person name="Herrick S.R."/>
            <person name="Lemyre E."/>
            <person name="Farra C.G."/>
            <person name="Kim H.-G."/>
            <person name="Summers A.M."/>
            <person name="Gripp K.W."/>
            <person name="Roberts W."/>
            <person name="Szatmari P."/>
            <person name="Winsor E.J.T."/>
            <person name="Grzeschik K.-H."/>
            <person name="Teebi A."/>
            <person name="Minassian B.A."/>
            <person name="Kere J."/>
            <person name="Armengol L."/>
            <person name="Pujana M.A."/>
            <person name="Estivill X."/>
            <person name="Wilson M.D."/>
            <person name="Koop B.F."/>
            <person name="Tosi S."/>
            <person name="Moore G.E."/>
            <person name="Boright A.P."/>
            <person name="Zlotorynski E."/>
            <person name="Kerem B."/>
            <person name="Kroisel P.M."/>
            <person name="Petek E."/>
            <person name="Oscier D.G."/>
            <person name="Mould S.J."/>
            <person name="Doehner H."/>
            <person name="Doehner K."/>
            <person name="Rommens J.M."/>
            <person name="Vincent J.B."/>
            <person name="Venter J.C."/>
            <person name="Li P.W."/>
            <person name="Mural R.J."/>
            <person name="Adams M.D."/>
            <person name="Tsui L.-C."/>
        </authorList>
    </citation>
    <scope>NUCLEOTIDE SEQUENCE [LARGE SCALE GENOMIC DNA]</scope>
</reference>
<reference key="3">
    <citation type="submission" date="2005-09" db="EMBL/GenBank/DDBJ databases">
        <authorList>
            <person name="Mural R.J."/>
            <person name="Istrail S."/>
            <person name="Sutton G.G."/>
            <person name="Florea L."/>
            <person name="Halpern A.L."/>
            <person name="Mobarry C.M."/>
            <person name="Lippert R."/>
            <person name="Walenz B."/>
            <person name="Shatkay H."/>
            <person name="Dew I."/>
            <person name="Miller J.R."/>
            <person name="Flanigan M.J."/>
            <person name="Edwards N.J."/>
            <person name="Bolanos R."/>
            <person name="Fasulo D."/>
            <person name="Halldorsson B.V."/>
            <person name="Hannenhalli S."/>
            <person name="Turner R."/>
            <person name="Yooseph S."/>
            <person name="Lu F."/>
            <person name="Nusskern D.R."/>
            <person name="Shue B.C."/>
            <person name="Zheng X.H."/>
            <person name="Zhong F."/>
            <person name="Delcher A.L."/>
            <person name="Huson D.H."/>
            <person name="Kravitz S.A."/>
            <person name="Mouchard L."/>
            <person name="Reinert K."/>
            <person name="Remington K.A."/>
            <person name="Clark A.G."/>
            <person name="Waterman M.S."/>
            <person name="Eichler E.E."/>
            <person name="Adams M.D."/>
            <person name="Hunkapiller M.W."/>
            <person name="Myers E.W."/>
            <person name="Venter J.C."/>
        </authorList>
    </citation>
    <scope>NUCLEOTIDE SEQUENCE [LARGE SCALE GENOMIC DNA]</scope>
</reference>
<reference key="4">
    <citation type="journal article" date="2003" name="Nature">
        <title>The DNA sequence of human chromosome 7.</title>
        <authorList>
            <person name="Hillier L.W."/>
            <person name="Fulton R.S."/>
            <person name="Fulton L.A."/>
            <person name="Graves T.A."/>
            <person name="Pepin K.H."/>
            <person name="Wagner-McPherson C."/>
            <person name="Layman D."/>
            <person name="Maas J."/>
            <person name="Jaeger S."/>
            <person name="Walker R."/>
            <person name="Wylie K."/>
            <person name="Sekhon M."/>
            <person name="Becker M.C."/>
            <person name="O'Laughlin M.D."/>
            <person name="Schaller M.E."/>
            <person name="Fewell G.A."/>
            <person name="Delehaunty K.D."/>
            <person name="Miner T.L."/>
            <person name="Nash W.E."/>
            <person name="Cordes M."/>
            <person name="Du H."/>
            <person name="Sun H."/>
            <person name="Edwards J."/>
            <person name="Bradshaw-Cordum H."/>
            <person name="Ali J."/>
            <person name="Andrews S."/>
            <person name="Isak A."/>
            <person name="Vanbrunt A."/>
            <person name="Nguyen C."/>
            <person name="Du F."/>
            <person name="Lamar B."/>
            <person name="Courtney L."/>
            <person name="Kalicki J."/>
            <person name="Ozersky P."/>
            <person name="Bielicki L."/>
            <person name="Scott K."/>
            <person name="Holmes A."/>
            <person name="Harkins R."/>
            <person name="Harris A."/>
            <person name="Strong C.M."/>
            <person name="Hou S."/>
            <person name="Tomlinson C."/>
            <person name="Dauphin-Kohlberg S."/>
            <person name="Kozlowicz-Reilly A."/>
            <person name="Leonard S."/>
            <person name="Rohlfing T."/>
            <person name="Rock S.M."/>
            <person name="Tin-Wollam A.-M."/>
            <person name="Abbott A."/>
            <person name="Minx P."/>
            <person name="Maupin R."/>
            <person name="Strowmatt C."/>
            <person name="Latreille P."/>
            <person name="Miller N."/>
            <person name="Johnson D."/>
            <person name="Murray J."/>
            <person name="Woessner J.P."/>
            <person name="Wendl M.C."/>
            <person name="Yang S.-P."/>
            <person name="Schultz B.R."/>
            <person name="Wallis J.W."/>
            <person name="Spieth J."/>
            <person name="Bieri T.A."/>
            <person name="Nelson J.O."/>
            <person name="Berkowicz N."/>
            <person name="Wohldmann P.E."/>
            <person name="Cook L.L."/>
            <person name="Hickenbotham M.T."/>
            <person name="Eldred J."/>
            <person name="Williams D."/>
            <person name="Bedell J.A."/>
            <person name="Mardis E.R."/>
            <person name="Clifton S.W."/>
            <person name="Chissoe S.L."/>
            <person name="Marra M.A."/>
            <person name="Raymond C."/>
            <person name="Haugen E."/>
            <person name="Gillett W."/>
            <person name="Zhou Y."/>
            <person name="James R."/>
            <person name="Phelps K."/>
            <person name="Iadanoto S."/>
            <person name="Bubb K."/>
            <person name="Simms E."/>
            <person name="Levy R."/>
            <person name="Clendenning J."/>
            <person name="Kaul R."/>
            <person name="Kent W.J."/>
            <person name="Furey T.S."/>
            <person name="Baertsch R.A."/>
            <person name="Brent M.R."/>
            <person name="Keibler E."/>
            <person name="Flicek P."/>
            <person name="Bork P."/>
            <person name="Suyama M."/>
            <person name="Bailey J.A."/>
            <person name="Portnoy M.E."/>
            <person name="Torrents D."/>
            <person name="Chinwalla A.T."/>
            <person name="Gish W.R."/>
            <person name="Eddy S.R."/>
            <person name="McPherson J.D."/>
            <person name="Olson M.V."/>
            <person name="Eichler E.E."/>
            <person name="Green E.D."/>
            <person name="Waterston R.H."/>
            <person name="Wilson R.K."/>
        </authorList>
    </citation>
    <scope>NUCLEOTIDE SEQUENCE [LARGE SCALE GENOMIC DNA]</scope>
</reference>
<reference key="5">
    <citation type="journal article" date="2004" name="Genome Res.">
        <title>The status, quality, and expansion of the NIH full-length cDNA project: the Mammalian Gene Collection (MGC).</title>
        <authorList>
            <consortium name="The MGC Project Team"/>
        </authorList>
    </citation>
    <scope>NUCLEOTIDE SEQUENCE [LARGE SCALE MRNA]</scope>
    <source>
        <tissue>Bone marrow</tissue>
        <tissue>Liver</tissue>
    </source>
</reference>
<reference key="6">
    <citation type="journal article" date="2015" name="Proteomics">
        <title>N-terminome analysis of the human mitochondrial proteome.</title>
        <authorList>
            <person name="Vaca Jacome A.S."/>
            <person name="Rabilloud T."/>
            <person name="Schaeffer-Reiss C."/>
            <person name="Rompais M."/>
            <person name="Ayoub D."/>
            <person name="Lane L."/>
            <person name="Bairoch A."/>
            <person name="Van Dorsselaer A."/>
            <person name="Carapito C."/>
        </authorList>
    </citation>
    <scope>IDENTIFICATION BY MASS SPECTROMETRY [LARGE SCALE ANALYSIS]</scope>
</reference>
<comment type="function">
    <text evidence="1 2">Plays an essential role in the assembly of succinate dehydrogenase (SDH), an enzyme complex (also referred to as respiratory complex II) that is a component of both the tricarboxylic acid (TCA) cycle and the mitochondrial electron transport chain, and which couples the oxidation of succinate to fumarate with the reduction of ubiquinone (coenzyme Q) to ubiquinol. Promotes maturation of the iron-sulfur protein subunit SDHB of the SDH catalytic dimer, protecting it from the deleterious effects of oxidants. May act together with SDHAF1.</text>
</comment>
<comment type="subunit">
    <text evidence="1">Interacts with SDHB within an SDHA-SDHB subcomplex.</text>
</comment>
<comment type="subcellular location">
    <subcellularLocation>
        <location evidence="1">Mitochondrion matrix</location>
    </subcellularLocation>
</comment>
<comment type="similarity">
    <text evidence="4">Belongs to the complex I LYR family. SDHAF3 subfamily.</text>
</comment>
<keyword id="KW-0143">Chaperone</keyword>
<keyword id="KW-0496">Mitochondrion</keyword>
<keyword id="KW-1267">Proteomics identification</keyword>
<keyword id="KW-1185">Reference proteome</keyword>
<keyword id="KW-0809">Transit peptide</keyword>
<sequence>MPGRHVSRVRALYKRVLQLHRVLPPDLKSLGDQYVKDEFRRHKTVGSDEAQRFLQEWEVYATALLQQANENRQNSTGKACFGTFLPEEKLNDFRDEQIGQLQELMQEATKPNRQFSISESMKPKF</sequence>